<accession>Q8ETV9</accession>
<name>RPOA_OCEIH</name>
<evidence type="ECO:0000255" key="1">
    <source>
        <dbReference type="HAMAP-Rule" id="MF_00059"/>
    </source>
</evidence>
<keyword id="KW-0240">DNA-directed RNA polymerase</keyword>
<keyword id="KW-0548">Nucleotidyltransferase</keyword>
<keyword id="KW-1185">Reference proteome</keyword>
<keyword id="KW-0804">Transcription</keyword>
<keyword id="KW-0808">Transferase</keyword>
<organism>
    <name type="scientific">Oceanobacillus iheyensis (strain DSM 14371 / CIP 107618 / JCM 11309 / KCTC 3954 / HTE831)</name>
    <dbReference type="NCBI Taxonomy" id="221109"/>
    <lineage>
        <taxon>Bacteria</taxon>
        <taxon>Bacillati</taxon>
        <taxon>Bacillota</taxon>
        <taxon>Bacilli</taxon>
        <taxon>Bacillales</taxon>
        <taxon>Bacillaceae</taxon>
        <taxon>Oceanobacillus</taxon>
    </lineage>
</organism>
<sequence>MIEIEKPKIETVEISENATFGKFVVEPLERGYGATLGNSLRRILLSSLPGAAVTTVQIDGALHEFSTVDGVVEDVTTIILNLKKLALKIYSEEPKTLEIDVQGEGAVTAADLTYDSDVEVMNPDLHIATLNSKGNLHMKLIAERGRGYRPAEENKNDDQPIGVIPIDSIFTPVSRVTYQVENTRVGQVANYDKLTMDVSTDGSIRPEEAVSLGAKIITEHLNIFVGLTDEAQNAEIMVEKEEDQKEKVMEMTIEELDLSVRSYNCLKRAGINTVQELANKSEEDMMKVRNLGRKSLEEVKVKLEDLGLGLRDDD</sequence>
<comment type="function">
    <text evidence="1">DNA-dependent RNA polymerase catalyzes the transcription of DNA into RNA using the four ribonucleoside triphosphates as substrates.</text>
</comment>
<comment type="catalytic activity">
    <reaction evidence="1">
        <text>RNA(n) + a ribonucleoside 5'-triphosphate = RNA(n+1) + diphosphate</text>
        <dbReference type="Rhea" id="RHEA:21248"/>
        <dbReference type="Rhea" id="RHEA-COMP:14527"/>
        <dbReference type="Rhea" id="RHEA-COMP:17342"/>
        <dbReference type="ChEBI" id="CHEBI:33019"/>
        <dbReference type="ChEBI" id="CHEBI:61557"/>
        <dbReference type="ChEBI" id="CHEBI:140395"/>
        <dbReference type="EC" id="2.7.7.6"/>
    </reaction>
</comment>
<comment type="subunit">
    <text evidence="1">Homodimer. The RNAP catalytic core consists of 2 alpha, 1 beta, 1 beta' and 1 omega subunit. When a sigma factor is associated with the core the holoenzyme is formed, which can initiate transcription.</text>
</comment>
<comment type="domain">
    <text evidence="1">The N-terminal domain is essential for RNAP assembly and basal transcription, whereas the C-terminal domain is involved in interaction with transcriptional regulators and with upstream promoter elements.</text>
</comment>
<comment type="similarity">
    <text evidence="1">Belongs to the RNA polymerase alpha chain family.</text>
</comment>
<reference key="1">
    <citation type="journal article" date="2002" name="Nucleic Acids Res.">
        <title>Genome sequence of Oceanobacillus iheyensis isolated from the Iheya Ridge and its unexpected adaptive capabilities to extreme environments.</title>
        <authorList>
            <person name="Takami H."/>
            <person name="Takaki Y."/>
            <person name="Uchiyama I."/>
        </authorList>
    </citation>
    <scope>NUCLEOTIDE SEQUENCE [LARGE SCALE GENOMIC DNA]</scope>
    <source>
        <strain>DSM 14371 / CIP 107618 / JCM 11309 / KCTC 3954 / HTE831</strain>
    </source>
</reference>
<dbReference type="EC" id="2.7.7.6" evidence="1"/>
<dbReference type="EMBL" id="BA000028">
    <property type="protein sequence ID" value="BAC12101.1"/>
    <property type="molecule type" value="Genomic_DNA"/>
</dbReference>
<dbReference type="RefSeq" id="WP_011064546.1">
    <property type="nucleotide sequence ID" value="NC_004193.1"/>
</dbReference>
<dbReference type="SMR" id="Q8ETV9"/>
<dbReference type="STRING" id="221109.gene:10732335"/>
<dbReference type="KEGG" id="oih:OB0145"/>
<dbReference type="eggNOG" id="COG0202">
    <property type="taxonomic scope" value="Bacteria"/>
</dbReference>
<dbReference type="HOGENOM" id="CLU_053084_0_1_9"/>
<dbReference type="OrthoDB" id="9805706at2"/>
<dbReference type="PhylomeDB" id="Q8ETV9"/>
<dbReference type="Proteomes" id="UP000000822">
    <property type="component" value="Chromosome"/>
</dbReference>
<dbReference type="GO" id="GO:0005737">
    <property type="term" value="C:cytoplasm"/>
    <property type="evidence" value="ECO:0007669"/>
    <property type="project" value="UniProtKB-ARBA"/>
</dbReference>
<dbReference type="GO" id="GO:0000428">
    <property type="term" value="C:DNA-directed RNA polymerase complex"/>
    <property type="evidence" value="ECO:0007669"/>
    <property type="project" value="UniProtKB-KW"/>
</dbReference>
<dbReference type="GO" id="GO:0003677">
    <property type="term" value="F:DNA binding"/>
    <property type="evidence" value="ECO:0007669"/>
    <property type="project" value="UniProtKB-UniRule"/>
</dbReference>
<dbReference type="GO" id="GO:0003899">
    <property type="term" value="F:DNA-directed RNA polymerase activity"/>
    <property type="evidence" value="ECO:0007669"/>
    <property type="project" value="UniProtKB-UniRule"/>
</dbReference>
<dbReference type="GO" id="GO:0046983">
    <property type="term" value="F:protein dimerization activity"/>
    <property type="evidence" value="ECO:0007669"/>
    <property type="project" value="InterPro"/>
</dbReference>
<dbReference type="GO" id="GO:0006351">
    <property type="term" value="P:DNA-templated transcription"/>
    <property type="evidence" value="ECO:0007669"/>
    <property type="project" value="UniProtKB-UniRule"/>
</dbReference>
<dbReference type="CDD" id="cd06928">
    <property type="entry name" value="RNAP_alpha_NTD"/>
    <property type="match status" value="1"/>
</dbReference>
<dbReference type="FunFam" id="1.10.150.20:FF:000001">
    <property type="entry name" value="DNA-directed RNA polymerase subunit alpha"/>
    <property type="match status" value="1"/>
</dbReference>
<dbReference type="FunFam" id="2.170.120.12:FF:000001">
    <property type="entry name" value="DNA-directed RNA polymerase subunit alpha"/>
    <property type="match status" value="1"/>
</dbReference>
<dbReference type="Gene3D" id="1.10.150.20">
    <property type="entry name" value="5' to 3' exonuclease, C-terminal subdomain"/>
    <property type="match status" value="1"/>
</dbReference>
<dbReference type="Gene3D" id="2.170.120.12">
    <property type="entry name" value="DNA-directed RNA polymerase, insert domain"/>
    <property type="match status" value="1"/>
</dbReference>
<dbReference type="Gene3D" id="3.30.1360.10">
    <property type="entry name" value="RNA polymerase, RBP11-like subunit"/>
    <property type="match status" value="1"/>
</dbReference>
<dbReference type="HAMAP" id="MF_00059">
    <property type="entry name" value="RNApol_bact_RpoA"/>
    <property type="match status" value="1"/>
</dbReference>
<dbReference type="InterPro" id="IPR011262">
    <property type="entry name" value="DNA-dir_RNA_pol_insert"/>
</dbReference>
<dbReference type="InterPro" id="IPR011263">
    <property type="entry name" value="DNA-dir_RNA_pol_RpoA/D/Rpb3"/>
</dbReference>
<dbReference type="InterPro" id="IPR011773">
    <property type="entry name" value="DNA-dir_RpoA"/>
</dbReference>
<dbReference type="InterPro" id="IPR036603">
    <property type="entry name" value="RBP11-like"/>
</dbReference>
<dbReference type="InterPro" id="IPR011260">
    <property type="entry name" value="RNAP_asu_C"/>
</dbReference>
<dbReference type="InterPro" id="IPR036643">
    <property type="entry name" value="RNApol_insert_sf"/>
</dbReference>
<dbReference type="NCBIfam" id="NF003513">
    <property type="entry name" value="PRK05182.1-2"/>
    <property type="match status" value="1"/>
</dbReference>
<dbReference type="NCBIfam" id="NF003515">
    <property type="entry name" value="PRK05182.2-1"/>
    <property type="match status" value="1"/>
</dbReference>
<dbReference type="NCBIfam" id="NF003516">
    <property type="entry name" value="PRK05182.2-2"/>
    <property type="match status" value="1"/>
</dbReference>
<dbReference type="NCBIfam" id="NF003519">
    <property type="entry name" value="PRK05182.2-5"/>
    <property type="match status" value="1"/>
</dbReference>
<dbReference type="NCBIfam" id="TIGR02027">
    <property type="entry name" value="rpoA"/>
    <property type="match status" value="1"/>
</dbReference>
<dbReference type="Pfam" id="PF01000">
    <property type="entry name" value="RNA_pol_A_bac"/>
    <property type="match status" value="1"/>
</dbReference>
<dbReference type="Pfam" id="PF03118">
    <property type="entry name" value="RNA_pol_A_CTD"/>
    <property type="match status" value="1"/>
</dbReference>
<dbReference type="Pfam" id="PF01193">
    <property type="entry name" value="RNA_pol_L"/>
    <property type="match status" value="1"/>
</dbReference>
<dbReference type="SMART" id="SM00662">
    <property type="entry name" value="RPOLD"/>
    <property type="match status" value="1"/>
</dbReference>
<dbReference type="SUPFAM" id="SSF47789">
    <property type="entry name" value="C-terminal domain of RNA polymerase alpha subunit"/>
    <property type="match status" value="1"/>
</dbReference>
<dbReference type="SUPFAM" id="SSF56553">
    <property type="entry name" value="Insert subdomain of RNA polymerase alpha subunit"/>
    <property type="match status" value="1"/>
</dbReference>
<dbReference type="SUPFAM" id="SSF55257">
    <property type="entry name" value="RBP11-like subunits of RNA polymerase"/>
    <property type="match status" value="1"/>
</dbReference>
<protein>
    <recommendedName>
        <fullName evidence="1">DNA-directed RNA polymerase subunit alpha</fullName>
        <shortName evidence="1">RNAP subunit alpha</shortName>
        <ecNumber evidence="1">2.7.7.6</ecNumber>
    </recommendedName>
    <alternativeName>
        <fullName evidence="1">RNA polymerase subunit alpha</fullName>
    </alternativeName>
    <alternativeName>
        <fullName evidence="1">Transcriptase subunit alpha</fullName>
    </alternativeName>
</protein>
<proteinExistence type="inferred from homology"/>
<feature type="chain" id="PRO_0000175350" description="DNA-directed RNA polymerase subunit alpha">
    <location>
        <begin position="1"/>
        <end position="314"/>
    </location>
</feature>
<feature type="region of interest" description="Alpha N-terminal domain (alpha-NTD)" evidence="1">
    <location>
        <begin position="1"/>
        <end position="228"/>
    </location>
</feature>
<feature type="region of interest" description="Alpha C-terminal domain (alpha-CTD)" evidence="1">
    <location>
        <begin position="245"/>
        <end position="314"/>
    </location>
</feature>
<gene>
    <name evidence="1" type="primary">rpoA</name>
    <name type="ordered locus">OB0145</name>
</gene>